<dbReference type="EC" id="2.5.1.75" evidence="1"/>
<dbReference type="EMBL" id="CP000903">
    <property type="protein sequence ID" value="ABY44652.1"/>
    <property type="molecule type" value="Genomic_DNA"/>
</dbReference>
<dbReference type="RefSeq" id="WP_012261514.1">
    <property type="nucleotide sequence ID" value="NC_010184.1"/>
</dbReference>
<dbReference type="SMR" id="A9VR03"/>
<dbReference type="KEGG" id="bwe:BcerKBAB4_3479"/>
<dbReference type="eggNOG" id="COG0324">
    <property type="taxonomic scope" value="Bacteria"/>
</dbReference>
<dbReference type="HOGENOM" id="CLU_032616_0_1_9"/>
<dbReference type="Proteomes" id="UP000002154">
    <property type="component" value="Chromosome"/>
</dbReference>
<dbReference type="GO" id="GO:0005524">
    <property type="term" value="F:ATP binding"/>
    <property type="evidence" value="ECO:0007669"/>
    <property type="project" value="UniProtKB-UniRule"/>
</dbReference>
<dbReference type="GO" id="GO:0052381">
    <property type="term" value="F:tRNA dimethylallyltransferase activity"/>
    <property type="evidence" value="ECO:0007669"/>
    <property type="project" value="UniProtKB-UniRule"/>
</dbReference>
<dbReference type="GO" id="GO:0006400">
    <property type="term" value="P:tRNA modification"/>
    <property type="evidence" value="ECO:0007669"/>
    <property type="project" value="TreeGrafter"/>
</dbReference>
<dbReference type="FunFam" id="1.10.20.140:FF:000001">
    <property type="entry name" value="tRNA dimethylallyltransferase"/>
    <property type="match status" value="1"/>
</dbReference>
<dbReference type="Gene3D" id="1.10.20.140">
    <property type="match status" value="1"/>
</dbReference>
<dbReference type="Gene3D" id="3.40.50.300">
    <property type="entry name" value="P-loop containing nucleotide triphosphate hydrolases"/>
    <property type="match status" value="1"/>
</dbReference>
<dbReference type="HAMAP" id="MF_00185">
    <property type="entry name" value="IPP_trans"/>
    <property type="match status" value="1"/>
</dbReference>
<dbReference type="InterPro" id="IPR039657">
    <property type="entry name" value="Dimethylallyltransferase"/>
</dbReference>
<dbReference type="InterPro" id="IPR018022">
    <property type="entry name" value="IPT"/>
</dbReference>
<dbReference type="InterPro" id="IPR027417">
    <property type="entry name" value="P-loop_NTPase"/>
</dbReference>
<dbReference type="NCBIfam" id="TIGR00174">
    <property type="entry name" value="miaA"/>
    <property type="match status" value="1"/>
</dbReference>
<dbReference type="PANTHER" id="PTHR11088">
    <property type="entry name" value="TRNA DIMETHYLALLYLTRANSFERASE"/>
    <property type="match status" value="1"/>
</dbReference>
<dbReference type="PANTHER" id="PTHR11088:SF60">
    <property type="entry name" value="TRNA DIMETHYLALLYLTRANSFERASE"/>
    <property type="match status" value="1"/>
</dbReference>
<dbReference type="Pfam" id="PF01715">
    <property type="entry name" value="IPPT"/>
    <property type="match status" value="1"/>
</dbReference>
<dbReference type="SUPFAM" id="SSF52540">
    <property type="entry name" value="P-loop containing nucleoside triphosphate hydrolases"/>
    <property type="match status" value="1"/>
</dbReference>
<reference key="1">
    <citation type="journal article" date="2008" name="Chem. Biol. Interact.">
        <title>Extending the Bacillus cereus group genomics to putative food-borne pathogens of different toxicity.</title>
        <authorList>
            <person name="Lapidus A."/>
            <person name="Goltsman E."/>
            <person name="Auger S."/>
            <person name="Galleron N."/>
            <person name="Segurens B."/>
            <person name="Dossat C."/>
            <person name="Land M.L."/>
            <person name="Broussolle V."/>
            <person name="Brillard J."/>
            <person name="Guinebretiere M.-H."/>
            <person name="Sanchis V."/>
            <person name="Nguen-the C."/>
            <person name="Lereclus D."/>
            <person name="Richardson P."/>
            <person name="Wincker P."/>
            <person name="Weissenbach J."/>
            <person name="Ehrlich S.D."/>
            <person name="Sorokin A."/>
        </authorList>
    </citation>
    <scope>NUCLEOTIDE SEQUENCE [LARGE SCALE GENOMIC DNA]</scope>
    <source>
        <strain>KBAB4</strain>
    </source>
</reference>
<keyword id="KW-0067">ATP-binding</keyword>
<keyword id="KW-0460">Magnesium</keyword>
<keyword id="KW-0547">Nucleotide-binding</keyword>
<keyword id="KW-0808">Transferase</keyword>
<keyword id="KW-0819">tRNA processing</keyword>
<proteinExistence type="inferred from homology"/>
<evidence type="ECO:0000255" key="1">
    <source>
        <dbReference type="HAMAP-Rule" id="MF_00185"/>
    </source>
</evidence>
<comment type="function">
    <text evidence="1">Catalyzes the transfer of a dimethylallyl group onto the adenine at position 37 in tRNAs that read codons beginning with uridine, leading to the formation of N6-(dimethylallyl)adenosine (i(6)A).</text>
</comment>
<comment type="catalytic activity">
    <reaction evidence="1">
        <text>adenosine(37) in tRNA + dimethylallyl diphosphate = N(6)-dimethylallyladenosine(37) in tRNA + diphosphate</text>
        <dbReference type="Rhea" id="RHEA:26482"/>
        <dbReference type="Rhea" id="RHEA-COMP:10162"/>
        <dbReference type="Rhea" id="RHEA-COMP:10375"/>
        <dbReference type="ChEBI" id="CHEBI:33019"/>
        <dbReference type="ChEBI" id="CHEBI:57623"/>
        <dbReference type="ChEBI" id="CHEBI:74411"/>
        <dbReference type="ChEBI" id="CHEBI:74415"/>
        <dbReference type="EC" id="2.5.1.75"/>
    </reaction>
</comment>
<comment type="cofactor">
    <cofactor evidence="1">
        <name>Mg(2+)</name>
        <dbReference type="ChEBI" id="CHEBI:18420"/>
    </cofactor>
</comment>
<comment type="subunit">
    <text evidence="1">Monomer.</text>
</comment>
<comment type="similarity">
    <text evidence="1">Belongs to the IPP transferase family.</text>
</comment>
<organism>
    <name type="scientific">Bacillus mycoides (strain KBAB4)</name>
    <name type="common">Bacillus weihenstephanensis</name>
    <dbReference type="NCBI Taxonomy" id="315730"/>
    <lineage>
        <taxon>Bacteria</taxon>
        <taxon>Bacillati</taxon>
        <taxon>Bacillota</taxon>
        <taxon>Bacilli</taxon>
        <taxon>Bacillales</taxon>
        <taxon>Bacillaceae</taxon>
        <taxon>Bacillus</taxon>
        <taxon>Bacillus cereus group</taxon>
    </lineage>
</organism>
<protein>
    <recommendedName>
        <fullName evidence="1">tRNA dimethylallyltransferase</fullName>
        <ecNumber evidence="1">2.5.1.75</ecNumber>
    </recommendedName>
    <alternativeName>
        <fullName evidence="1">Dimethylallyl diphosphate:tRNA dimethylallyltransferase</fullName>
        <shortName evidence="1">DMAPP:tRNA dimethylallyltransferase</shortName>
        <shortName evidence="1">DMATase</shortName>
    </alternativeName>
    <alternativeName>
        <fullName evidence="1">Isopentenyl-diphosphate:tRNA isopentenyltransferase</fullName>
        <shortName evidence="1">IPP transferase</shortName>
        <shortName evidence="1">IPPT</shortName>
        <shortName evidence="1">IPTase</shortName>
    </alternativeName>
</protein>
<sequence length="317" mass="36414">MGEVQREKVAVIIGPTAVGKTKLSIDLAKALNGEIVSGDSMQIYRTMDIGTAKVTTDEMDGIPHYMIDIKDPEDSFSVAEFQESVRKCIREITERGKLPIIVGGTGLYIQSVLFDYQFTDEAGDATYREQMEKLALEHGVEYVHKKLQEVDPESAERIHANNVRRVIRALEIFHTTGEKMSNQLEKQENELLYDVSLIGLTMDREMLYDRINLRVNLMIEQGLLEEVKGLHERGVRDCQSIQAIGYKEIYDYFENRVSLEEAVSQLKTNSRRYAKRQLTWFRNKMDVGWFDVTDGEKTSEILRYIEGKLQLKSNNSK</sequence>
<name>MIAA_BACMK</name>
<feature type="chain" id="PRO_1000098641" description="tRNA dimethylallyltransferase">
    <location>
        <begin position="1"/>
        <end position="317"/>
    </location>
</feature>
<feature type="region of interest" description="Interaction with substrate tRNA" evidence="1">
    <location>
        <begin position="39"/>
        <end position="42"/>
    </location>
</feature>
<feature type="binding site" evidence="1">
    <location>
        <begin position="14"/>
        <end position="21"/>
    </location>
    <ligand>
        <name>ATP</name>
        <dbReference type="ChEBI" id="CHEBI:30616"/>
    </ligand>
</feature>
<feature type="binding site" evidence="1">
    <location>
        <begin position="16"/>
        <end position="21"/>
    </location>
    <ligand>
        <name>substrate</name>
    </ligand>
</feature>
<feature type="site" description="Interaction with substrate tRNA" evidence="1">
    <location>
        <position position="105"/>
    </location>
</feature>
<feature type="site" description="Interaction with substrate tRNA" evidence="1">
    <location>
        <position position="128"/>
    </location>
</feature>
<gene>
    <name evidence="1" type="primary">miaA</name>
    <name type="ordered locus">BcerKBAB4_3479</name>
</gene>
<accession>A9VR03</accession>